<gene>
    <name evidence="10" type="primary">p27/30</name>
</gene>
<dbReference type="EMBL" id="EF088685">
    <property type="protein sequence ID" value="ABK76292.1"/>
    <property type="molecule type" value="mRNA"/>
</dbReference>
<dbReference type="EMBL" id="AB051079">
    <property type="protein sequence ID" value="BAB55451.1"/>
    <property type="molecule type" value="mRNA"/>
</dbReference>
<dbReference type="SMR" id="Q969A1"/>
<dbReference type="VEuPathDB" id="VectorBase:HLOH_059997"/>
<dbReference type="OrthoDB" id="371899at2759"/>
<dbReference type="GO" id="GO:0005861">
    <property type="term" value="C:troponin complex"/>
    <property type="evidence" value="ECO:0007669"/>
    <property type="project" value="InterPro"/>
</dbReference>
<dbReference type="GO" id="GO:0035821">
    <property type="term" value="P:modulation of process of another organism"/>
    <property type="evidence" value="ECO:0000314"/>
    <property type="project" value="UniProtKB"/>
</dbReference>
<dbReference type="GO" id="GO:0006936">
    <property type="term" value="P:muscle contraction"/>
    <property type="evidence" value="ECO:0007669"/>
    <property type="project" value="TreeGrafter"/>
</dbReference>
<dbReference type="Gene3D" id="1.20.5.350">
    <property type="match status" value="1"/>
</dbReference>
<dbReference type="InterPro" id="IPR001978">
    <property type="entry name" value="Troponin"/>
</dbReference>
<dbReference type="InterPro" id="IPR050875">
    <property type="entry name" value="Troponin_I"/>
</dbReference>
<dbReference type="InterPro" id="IPR038077">
    <property type="entry name" value="Troponin_sf"/>
</dbReference>
<dbReference type="PANTHER" id="PTHR13738">
    <property type="entry name" value="TROPONIN I"/>
    <property type="match status" value="1"/>
</dbReference>
<dbReference type="PANTHER" id="PTHR13738:SF1">
    <property type="entry name" value="TROPONIN I"/>
    <property type="match status" value="1"/>
</dbReference>
<dbReference type="Pfam" id="PF00992">
    <property type="entry name" value="Troponin"/>
    <property type="match status" value="1"/>
</dbReference>
<dbReference type="SUPFAM" id="SSF90250">
    <property type="entry name" value="Troponin coil-coiled subunits"/>
    <property type="match status" value="1"/>
</dbReference>
<feature type="chain" id="PRO_0000461489" description="Troponin I-like protein" evidence="1">
    <location>
        <begin position="1"/>
        <end position="200"/>
    </location>
</feature>
<feature type="region of interest" description="Disordered" evidence="2">
    <location>
        <begin position="1"/>
        <end position="20"/>
    </location>
</feature>
<feature type="region of interest" description="Disordered" evidence="2">
    <location>
        <begin position="181"/>
        <end position="200"/>
    </location>
</feature>
<feature type="coiled-coil region" evidence="1">
    <location>
        <begin position="2"/>
        <end position="116"/>
    </location>
</feature>
<name>HLTNI_HAELO</name>
<protein>
    <recommendedName>
        <fullName evidence="6 7">Troponin I-like protein</fullName>
        <shortName evidence="7">HLTnI</shortName>
    </recommendedName>
</protein>
<organism evidence="11">
    <name type="scientific">Haemaphysalis longicornis</name>
    <name type="common">Bush tick</name>
    <dbReference type="NCBI Taxonomy" id="44386"/>
    <lineage>
        <taxon>Eukaryota</taxon>
        <taxon>Metazoa</taxon>
        <taxon>Ecdysozoa</taxon>
        <taxon>Arthropoda</taxon>
        <taxon>Chelicerata</taxon>
        <taxon>Arachnida</taxon>
        <taxon>Acari</taxon>
        <taxon>Parasitiformes</taxon>
        <taxon>Ixodida</taxon>
        <taxon>Ixodoidea</taxon>
        <taxon>Ixodidae</taxon>
        <taxon>Haemaphysalinae</taxon>
        <taxon>Haemaphysalis</taxon>
    </lineage>
</organism>
<keyword id="KW-0175">Coiled coil</keyword>
<accession>Q969A1</accession>
<comment type="function">
    <text evidence="5 9">Inhibits endothelial cell proliferation and angiogenesis in a vertebrate host (PubMed:16631826). Probably required for efficient blood feeding on vertebrate hosts (Probable).</text>
</comment>
<comment type="tissue specificity">
    <text evidence="3">Expressed in salivary gland, gut, muscle and cuticle (at protein level).</text>
</comment>
<comment type="miscellaneous">
    <text evidence="4">Rabbits immunized against the protein show higher resistance to tick infestation; feeding on immunized animals results in longer feeding duration for larval and adult ticks, lower engorgement rates for larval ticks and reduction in egg weights for adult ticks.</text>
</comment>
<comment type="similarity">
    <text evidence="8">Belongs to the troponin I family.</text>
</comment>
<proteinExistence type="evidence at protein level"/>
<reference evidence="11" key="1">
    <citation type="journal article" date="2001" name="Insect Biochem. Mol. Biol.">
        <title>Molecular characterization of a troponin I-like protein from the hard tick Haemaphysalis longicornis.</title>
        <authorList>
            <person name="You M."/>
            <person name="Xuan X."/>
            <person name="Tsuji N."/>
            <person name="Kamio T."/>
            <person name="Igarashi I."/>
            <person name="Nagasawa H."/>
            <person name="Mikami T."/>
            <person name="Fujisaki K."/>
        </authorList>
    </citation>
    <scope>NUCLEOTIDE SEQUENCE [MRNA]</scope>
    <scope>TISSUE SPECIFICITY</scope>
    <source>
        <strain evidence="6">Okayama</strain>
    </source>
</reference>
<reference evidence="10" key="2">
    <citation type="submission" date="2006-10" db="EMBL/GenBank/DDBJ databases">
        <title>Clone and sequence analysis of the p27/30 gene of hard tick Haemaphysalis longicornis.</title>
        <authorList>
            <person name="Yang C."/>
            <person name="Yang G."/>
            <person name="Jia X."/>
            <person name="Zhang X."/>
            <person name="Liu D."/>
        </authorList>
    </citation>
    <scope>NUCLEOTIDE SEQUENCE [MRNA]</scope>
</reference>
<reference evidence="8" key="3">
    <citation type="journal article" date="2004" name="Korean J. Parasitol.">
        <title>Immunization effect of recombinant P27/30 protein expressed in Escherichia coli against the hard tick Haemaphysalis longicornis (Acari: Ixodidae) in rabbits.</title>
        <authorList>
            <person name="You M.J."/>
        </authorList>
    </citation>
    <scope>FUNCTION</scope>
</reference>
<reference evidence="8" key="4">
    <citation type="journal article" date="2006" name="Microvasc. Res.">
        <title>Tick troponin I-like molecule is a potent inhibitor for angiogenesis.</title>
        <authorList>
            <person name="Fukumoto S."/>
            <person name="Sakaguchi T."/>
            <person name="You M."/>
            <person name="Xuan X."/>
            <person name="Fujisaki K."/>
        </authorList>
    </citation>
    <scope>FUNCTION</scope>
    <source>
        <strain evidence="6">Okayama</strain>
    </source>
</reference>
<evidence type="ECO:0000255" key="1"/>
<evidence type="ECO:0000256" key="2">
    <source>
        <dbReference type="SAM" id="MobiDB-lite"/>
    </source>
</evidence>
<evidence type="ECO:0000269" key="3">
    <source>
    </source>
</evidence>
<evidence type="ECO:0000269" key="4">
    <source>
    </source>
</evidence>
<evidence type="ECO:0000269" key="5">
    <source>
    </source>
</evidence>
<evidence type="ECO:0000303" key="6">
    <source>
    </source>
</evidence>
<evidence type="ECO:0000303" key="7">
    <source>
    </source>
</evidence>
<evidence type="ECO:0000305" key="8"/>
<evidence type="ECO:0000305" key="9">
    <source>
    </source>
</evidence>
<evidence type="ECO:0000312" key="10">
    <source>
        <dbReference type="EMBL" id="ABK76292.1"/>
    </source>
</evidence>
<evidence type="ECO:0000312" key="11">
    <source>
        <dbReference type="EMBL" id="BAB55451.1"/>
    </source>
</evidence>
<sequence length="200" mass="23386">MGDEEKRKMEEKERKKAEVRKRLEEAAKAKKAGGKRGFMTPERKKKLRNLLRKKAAEELKKEQERKAEQRRKIIAERIGQPKPLDNCNEATLVGILKQYHARIAQLEDAKYDLEYEVRQKDFVINELTIQVNDLRGKFVKPALKKVSKFDKLKMVVKSTSEVDFRSSLKSVKKDAFKLDEENKADKKPEWALGSKKENEE</sequence>